<comment type="function">
    <text evidence="1">Involved in the biosynthesis of branched-chain amino acids (BCAA). Catalyzes an alkyl-migration followed by a ketol-acid reduction of (S)-2-acetolactate (S2AL) to yield (R)-2,3-dihydroxy-isovalerate. In the isomerase reaction, S2AL is rearranged via a Mg-dependent methyl migration to produce 3-hydroxy-3-methyl-2-ketobutyrate (HMKB). In the reductase reaction, this 2-ketoacid undergoes a metal-dependent reduction by NADPH to yield (R)-2,3-dihydroxy-isovalerate.</text>
</comment>
<comment type="catalytic activity">
    <reaction evidence="1">
        <text>(2R)-2,3-dihydroxy-3-methylbutanoate + NADP(+) = (2S)-2-acetolactate + NADPH + H(+)</text>
        <dbReference type="Rhea" id="RHEA:22068"/>
        <dbReference type="ChEBI" id="CHEBI:15378"/>
        <dbReference type="ChEBI" id="CHEBI:49072"/>
        <dbReference type="ChEBI" id="CHEBI:57783"/>
        <dbReference type="ChEBI" id="CHEBI:58349"/>
        <dbReference type="ChEBI" id="CHEBI:58476"/>
        <dbReference type="EC" id="1.1.1.86"/>
    </reaction>
</comment>
<comment type="catalytic activity">
    <reaction evidence="1">
        <text>(2R,3R)-2,3-dihydroxy-3-methylpentanoate + NADP(+) = (S)-2-ethyl-2-hydroxy-3-oxobutanoate + NADPH + H(+)</text>
        <dbReference type="Rhea" id="RHEA:13493"/>
        <dbReference type="ChEBI" id="CHEBI:15378"/>
        <dbReference type="ChEBI" id="CHEBI:49256"/>
        <dbReference type="ChEBI" id="CHEBI:49258"/>
        <dbReference type="ChEBI" id="CHEBI:57783"/>
        <dbReference type="ChEBI" id="CHEBI:58349"/>
        <dbReference type="EC" id="1.1.1.86"/>
    </reaction>
</comment>
<comment type="cofactor">
    <cofactor evidence="1">
        <name>Mg(2+)</name>
        <dbReference type="ChEBI" id="CHEBI:18420"/>
    </cofactor>
    <text evidence="1">Binds 2 magnesium ions per subunit.</text>
</comment>
<comment type="pathway">
    <text evidence="1">Amino-acid biosynthesis; L-isoleucine biosynthesis; L-isoleucine from 2-oxobutanoate: step 2/4.</text>
</comment>
<comment type="pathway">
    <text evidence="1">Amino-acid biosynthesis; L-valine biosynthesis; L-valine from pyruvate: step 2/4.</text>
</comment>
<comment type="similarity">
    <text evidence="1">Belongs to the ketol-acid reductoisomerase family.</text>
</comment>
<reference key="1">
    <citation type="submission" date="2006-08" db="EMBL/GenBank/DDBJ databases">
        <title>Complete sequence of chromosome 1 of Burkholderia cenocepacia HI2424.</title>
        <authorList>
            <person name="Copeland A."/>
            <person name="Lucas S."/>
            <person name="Lapidus A."/>
            <person name="Barry K."/>
            <person name="Detter J.C."/>
            <person name="Glavina del Rio T."/>
            <person name="Hammon N."/>
            <person name="Israni S."/>
            <person name="Pitluck S."/>
            <person name="Chain P."/>
            <person name="Malfatti S."/>
            <person name="Shin M."/>
            <person name="Vergez L."/>
            <person name="Schmutz J."/>
            <person name="Larimer F."/>
            <person name="Land M."/>
            <person name="Hauser L."/>
            <person name="Kyrpides N."/>
            <person name="Kim E."/>
            <person name="LiPuma J.J."/>
            <person name="Gonzalez C.F."/>
            <person name="Konstantinidis K."/>
            <person name="Tiedje J.M."/>
            <person name="Richardson P."/>
        </authorList>
    </citation>
    <scope>NUCLEOTIDE SEQUENCE [LARGE SCALE GENOMIC DNA]</scope>
    <source>
        <strain>HI2424</strain>
    </source>
</reference>
<organism>
    <name type="scientific">Burkholderia cenocepacia (strain HI2424)</name>
    <dbReference type="NCBI Taxonomy" id="331272"/>
    <lineage>
        <taxon>Bacteria</taxon>
        <taxon>Pseudomonadati</taxon>
        <taxon>Pseudomonadota</taxon>
        <taxon>Betaproteobacteria</taxon>
        <taxon>Burkholderiales</taxon>
        <taxon>Burkholderiaceae</taxon>
        <taxon>Burkholderia</taxon>
        <taxon>Burkholderia cepacia complex</taxon>
    </lineage>
</organism>
<sequence>MNVFYDKDADLSLIKGKQVTIIGYGSQGHAHALNLKDSGVNVTVGLRKGGASWSKAENAGLSVKEVAEAVKGADVVMMLLPDEQIADVYAKEVHANIKQGAALAFAHGFNVHYGQVIPRADLDVIMIAPKAPGHTVRGTYSQGGGVPHLIAVAQNKSGAARDIALSYAAANGGGRAGIIETNFREETETDLFGEQAVLCGGTVELIKAGFETLVEAGYAPEMAYFECLHELKLIVDLIYEGGIANMNYSISNNAEYGEYVTGPRVVTEETKKAMKQCLTDIQTGEYAKSFILENKAGAPTLQSRRRLTAEHQIEQVGAKLRAMMPWIAKNKLVDQTKN</sequence>
<proteinExistence type="inferred from homology"/>
<gene>
    <name evidence="1" type="primary">ilvC</name>
    <name type="ordered locus">Bcen2424_2263</name>
</gene>
<evidence type="ECO:0000255" key="1">
    <source>
        <dbReference type="HAMAP-Rule" id="MF_00435"/>
    </source>
</evidence>
<evidence type="ECO:0000255" key="2">
    <source>
        <dbReference type="PROSITE-ProRule" id="PRU01197"/>
    </source>
</evidence>
<evidence type="ECO:0000255" key="3">
    <source>
        <dbReference type="PROSITE-ProRule" id="PRU01198"/>
    </source>
</evidence>
<dbReference type="EC" id="1.1.1.86" evidence="1"/>
<dbReference type="EMBL" id="CP000458">
    <property type="protein sequence ID" value="ABK09014.1"/>
    <property type="molecule type" value="Genomic_DNA"/>
</dbReference>
<dbReference type="RefSeq" id="WP_006478252.1">
    <property type="nucleotide sequence ID" value="NC_008542.1"/>
</dbReference>
<dbReference type="SMR" id="A0K937"/>
<dbReference type="GeneID" id="83049075"/>
<dbReference type="KEGG" id="bch:Bcen2424_2263"/>
<dbReference type="HOGENOM" id="CLU_033821_0_1_4"/>
<dbReference type="UniPathway" id="UPA00047">
    <property type="reaction ID" value="UER00056"/>
</dbReference>
<dbReference type="UniPathway" id="UPA00049">
    <property type="reaction ID" value="UER00060"/>
</dbReference>
<dbReference type="GO" id="GO:0005829">
    <property type="term" value="C:cytosol"/>
    <property type="evidence" value="ECO:0007669"/>
    <property type="project" value="TreeGrafter"/>
</dbReference>
<dbReference type="GO" id="GO:0004455">
    <property type="term" value="F:ketol-acid reductoisomerase activity"/>
    <property type="evidence" value="ECO:0007669"/>
    <property type="project" value="UniProtKB-UniRule"/>
</dbReference>
<dbReference type="GO" id="GO:0000287">
    <property type="term" value="F:magnesium ion binding"/>
    <property type="evidence" value="ECO:0007669"/>
    <property type="project" value="UniProtKB-UniRule"/>
</dbReference>
<dbReference type="GO" id="GO:0050661">
    <property type="term" value="F:NADP binding"/>
    <property type="evidence" value="ECO:0007669"/>
    <property type="project" value="InterPro"/>
</dbReference>
<dbReference type="GO" id="GO:0009097">
    <property type="term" value="P:isoleucine biosynthetic process"/>
    <property type="evidence" value="ECO:0007669"/>
    <property type="project" value="UniProtKB-UniRule"/>
</dbReference>
<dbReference type="GO" id="GO:0009099">
    <property type="term" value="P:L-valine biosynthetic process"/>
    <property type="evidence" value="ECO:0007669"/>
    <property type="project" value="UniProtKB-UniRule"/>
</dbReference>
<dbReference type="FunFam" id="3.40.50.720:FF:000023">
    <property type="entry name" value="Ketol-acid reductoisomerase (NADP(+))"/>
    <property type="match status" value="1"/>
</dbReference>
<dbReference type="Gene3D" id="6.10.240.10">
    <property type="match status" value="1"/>
</dbReference>
<dbReference type="Gene3D" id="3.40.50.720">
    <property type="entry name" value="NAD(P)-binding Rossmann-like Domain"/>
    <property type="match status" value="1"/>
</dbReference>
<dbReference type="HAMAP" id="MF_00435">
    <property type="entry name" value="IlvC"/>
    <property type="match status" value="1"/>
</dbReference>
<dbReference type="InterPro" id="IPR008927">
    <property type="entry name" value="6-PGluconate_DH-like_C_sf"/>
</dbReference>
<dbReference type="InterPro" id="IPR013023">
    <property type="entry name" value="KARI"/>
</dbReference>
<dbReference type="InterPro" id="IPR000506">
    <property type="entry name" value="KARI_C"/>
</dbReference>
<dbReference type="InterPro" id="IPR013116">
    <property type="entry name" value="KARI_N"/>
</dbReference>
<dbReference type="InterPro" id="IPR014359">
    <property type="entry name" value="KARI_prok"/>
</dbReference>
<dbReference type="InterPro" id="IPR036291">
    <property type="entry name" value="NAD(P)-bd_dom_sf"/>
</dbReference>
<dbReference type="NCBIfam" id="TIGR00465">
    <property type="entry name" value="ilvC"/>
    <property type="match status" value="1"/>
</dbReference>
<dbReference type="NCBIfam" id="NF004017">
    <property type="entry name" value="PRK05479.1"/>
    <property type="match status" value="1"/>
</dbReference>
<dbReference type="NCBIfam" id="NF009940">
    <property type="entry name" value="PRK13403.1"/>
    <property type="match status" value="1"/>
</dbReference>
<dbReference type="PANTHER" id="PTHR21371">
    <property type="entry name" value="KETOL-ACID REDUCTOISOMERASE, MITOCHONDRIAL"/>
    <property type="match status" value="1"/>
</dbReference>
<dbReference type="PANTHER" id="PTHR21371:SF1">
    <property type="entry name" value="KETOL-ACID REDUCTOISOMERASE, MITOCHONDRIAL"/>
    <property type="match status" value="1"/>
</dbReference>
<dbReference type="Pfam" id="PF01450">
    <property type="entry name" value="KARI_C"/>
    <property type="match status" value="1"/>
</dbReference>
<dbReference type="Pfam" id="PF07991">
    <property type="entry name" value="KARI_N"/>
    <property type="match status" value="1"/>
</dbReference>
<dbReference type="PIRSF" id="PIRSF000116">
    <property type="entry name" value="IlvC_gammaproteo"/>
    <property type="match status" value="1"/>
</dbReference>
<dbReference type="SUPFAM" id="SSF48179">
    <property type="entry name" value="6-phosphogluconate dehydrogenase C-terminal domain-like"/>
    <property type="match status" value="1"/>
</dbReference>
<dbReference type="SUPFAM" id="SSF51735">
    <property type="entry name" value="NAD(P)-binding Rossmann-fold domains"/>
    <property type="match status" value="1"/>
</dbReference>
<dbReference type="PROSITE" id="PS51851">
    <property type="entry name" value="KARI_C"/>
    <property type="match status" value="1"/>
</dbReference>
<dbReference type="PROSITE" id="PS51850">
    <property type="entry name" value="KARI_N"/>
    <property type="match status" value="1"/>
</dbReference>
<protein>
    <recommendedName>
        <fullName evidence="1">Ketol-acid reductoisomerase (NADP(+))</fullName>
        <shortName evidence="1">KARI</shortName>
        <ecNumber evidence="1">1.1.1.86</ecNumber>
    </recommendedName>
    <alternativeName>
        <fullName evidence="1">Acetohydroxy-acid isomeroreductase</fullName>
        <shortName evidence="1">AHIR</shortName>
    </alternativeName>
    <alternativeName>
        <fullName evidence="1">Alpha-keto-beta-hydroxylacyl reductoisomerase</fullName>
    </alternativeName>
    <alternativeName>
        <fullName evidence="1">Ketol-acid reductoisomerase type 1</fullName>
    </alternativeName>
    <alternativeName>
        <fullName evidence="1">Ketol-acid reductoisomerase type I</fullName>
    </alternativeName>
</protein>
<accession>A0K937</accession>
<feature type="chain" id="PRO_1000050484" description="Ketol-acid reductoisomerase (NADP(+))">
    <location>
        <begin position="1"/>
        <end position="338"/>
    </location>
</feature>
<feature type="domain" description="KARI N-terminal Rossmann" evidence="2">
    <location>
        <begin position="1"/>
        <end position="181"/>
    </location>
</feature>
<feature type="domain" description="KARI C-terminal knotted" evidence="3">
    <location>
        <begin position="182"/>
        <end position="327"/>
    </location>
</feature>
<feature type="active site" evidence="1">
    <location>
        <position position="107"/>
    </location>
</feature>
<feature type="binding site" evidence="1">
    <location>
        <begin position="24"/>
        <end position="27"/>
    </location>
    <ligand>
        <name>NADP(+)</name>
        <dbReference type="ChEBI" id="CHEBI:58349"/>
    </ligand>
</feature>
<feature type="binding site" evidence="1">
    <location>
        <position position="47"/>
    </location>
    <ligand>
        <name>NADP(+)</name>
        <dbReference type="ChEBI" id="CHEBI:58349"/>
    </ligand>
</feature>
<feature type="binding site" evidence="1">
    <location>
        <position position="52"/>
    </location>
    <ligand>
        <name>NADP(+)</name>
        <dbReference type="ChEBI" id="CHEBI:58349"/>
    </ligand>
</feature>
<feature type="binding site" evidence="1">
    <location>
        <position position="133"/>
    </location>
    <ligand>
        <name>NADP(+)</name>
        <dbReference type="ChEBI" id="CHEBI:58349"/>
    </ligand>
</feature>
<feature type="binding site" evidence="1">
    <location>
        <position position="190"/>
    </location>
    <ligand>
        <name>Mg(2+)</name>
        <dbReference type="ChEBI" id="CHEBI:18420"/>
        <label>1</label>
    </ligand>
</feature>
<feature type="binding site" evidence="1">
    <location>
        <position position="190"/>
    </location>
    <ligand>
        <name>Mg(2+)</name>
        <dbReference type="ChEBI" id="CHEBI:18420"/>
        <label>2</label>
    </ligand>
</feature>
<feature type="binding site" evidence="1">
    <location>
        <position position="194"/>
    </location>
    <ligand>
        <name>Mg(2+)</name>
        <dbReference type="ChEBI" id="CHEBI:18420"/>
        <label>1</label>
    </ligand>
</feature>
<feature type="binding site" evidence="1">
    <location>
        <position position="226"/>
    </location>
    <ligand>
        <name>Mg(2+)</name>
        <dbReference type="ChEBI" id="CHEBI:18420"/>
        <label>2</label>
    </ligand>
</feature>
<feature type="binding site" evidence="1">
    <location>
        <position position="230"/>
    </location>
    <ligand>
        <name>Mg(2+)</name>
        <dbReference type="ChEBI" id="CHEBI:18420"/>
        <label>2</label>
    </ligand>
</feature>
<feature type="binding site" evidence="1">
    <location>
        <position position="251"/>
    </location>
    <ligand>
        <name>substrate</name>
    </ligand>
</feature>
<keyword id="KW-0028">Amino-acid biosynthesis</keyword>
<keyword id="KW-0100">Branched-chain amino acid biosynthesis</keyword>
<keyword id="KW-0460">Magnesium</keyword>
<keyword id="KW-0479">Metal-binding</keyword>
<keyword id="KW-0521">NADP</keyword>
<keyword id="KW-0560">Oxidoreductase</keyword>
<name>ILVC_BURCH</name>